<sequence>MSRIWDISQPLHAAVPVWPGEPAFSLHSHAVIGEGCPVNVGGMFTPLHAGTHGDAPLHYSNDGASSADCELAPYIGPCALIDVRHARGRVEIGDIDWSCVDGAERVLLRTYEQFPHEKWDSDFTAVAADVIERFGAMGVRLIGTDAASLDPEQSKTLDAHQAVKAADMRILEGLVLDDVPPGRYELIALPLRIVGADASPVRAILREIA</sequence>
<keyword id="KW-0378">Hydrolase</keyword>
<keyword id="KW-0479">Metal-binding</keyword>
<keyword id="KW-1185">Reference proteome</keyword>
<keyword id="KW-0823">Tryptophan catabolism</keyword>
<keyword id="KW-0862">Zinc</keyword>
<organism>
    <name type="scientific">Sphingopyxis alaskensis (strain DSM 13593 / LMG 18877 / RB2256)</name>
    <name type="common">Sphingomonas alaskensis</name>
    <dbReference type="NCBI Taxonomy" id="317655"/>
    <lineage>
        <taxon>Bacteria</taxon>
        <taxon>Pseudomonadati</taxon>
        <taxon>Pseudomonadota</taxon>
        <taxon>Alphaproteobacteria</taxon>
        <taxon>Sphingomonadales</taxon>
        <taxon>Sphingomonadaceae</taxon>
        <taxon>Sphingopyxis</taxon>
    </lineage>
</organism>
<comment type="function">
    <text evidence="1">Catalyzes the hydrolysis of N-formyl-L-kynurenine to L-kynurenine, the second step in the kynurenine pathway of tryptophan degradation.</text>
</comment>
<comment type="catalytic activity">
    <reaction evidence="1">
        <text>N-formyl-L-kynurenine + H2O = L-kynurenine + formate + H(+)</text>
        <dbReference type="Rhea" id="RHEA:13009"/>
        <dbReference type="ChEBI" id="CHEBI:15377"/>
        <dbReference type="ChEBI" id="CHEBI:15378"/>
        <dbReference type="ChEBI" id="CHEBI:15740"/>
        <dbReference type="ChEBI" id="CHEBI:57959"/>
        <dbReference type="ChEBI" id="CHEBI:58629"/>
        <dbReference type="EC" id="3.5.1.9"/>
    </reaction>
</comment>
<comment type="cofactor">
    <cofactor evidence="1">
        <name>Zn(2+)</name>
        <dbReference type="ChEBI" id="CHEBI:29105"/>
    </cofactor>
    <text evidence="1">Binds 2 zinc ions per subunit.</text>
</comment>
<comment type="pathway">
    <text evidence="1">Amino-acid degradation; L-tryptophan degradation via kynurenine pathway; L-kynurenine from L-tryptophan: step 2/2.</text>
</comment>
<comment type="subunit">
    <text evidence="1">Homodimer.</text>
</comment>
<comment type="similarity">
    <text evidence="1">Belongs to the Cyclase 1 superfamily. KynB family.</text>
</comment>
<feature type="chain" id="PRO_0000362139" description="Kynurenine formamidase">
    <location>
        <begin position="1"/>
        <end position="209"/>
    </location>
</feature>
<feature type="active site" description="Proton donor/acceptor" evidence="1">
    <location>
        <position position="58"/>
    </location>
</feature>
<feature type="binding site" evidence="1">
    <location>
        <position position="18"/>
    </location>
    <ligand>
        <name>substrate</name>
    </ligand>
</feature>
<feature type="binding site" evidence="1">
    <location>
        <position position="48"/>
    </location>
    <ligand>
        <name>Zn(2+)</name>
        <dbReference type="ChEBI" id="CHEBI:29105"/>
        <label>1</label>
    </ligand>
</feature>
<feature type="binding site" evidence="1">
    <location>
        <position position="52"/>
    </location>
    <ligand>
        <name>Zn(2+)</name>
        <dbReference type="ChEBI" id="CHEBI:29105"/>
        <label>1</label>
    </ligand>
</feature>
<feature type="binding site" evidence="1">
    <location>
        <position position="54"/>
    </location>
    <ligand>
        <name>Zn(2+)</name>
        <dbReference type="ChEBI" id="CHEBI:29105"/>
        <label>1</label>
    </ligand>
</feature>
<feature type="binding site" evidence="1">
    <location>
        <position position="54"/>
    </location>
    <ligand>
        <name>Zn(2+)</name>
        <dbReference type="ChEBI" id="CHEBI:29105"/>
        <label>2</label>
    </ligand>
</feature>
<feature type="binding site" evidence="1">
    <location>
        <position position="160"/>
    </location>
    <ligand>
        <name>Zn(2+)</name>
        <dbReference type="ChEBI" id="CHEBI:29105"/>
        <label>2</label>
    </ligand>
</feature>
<feature type="binding site" evidence="1">
    <location>
        <position position="172"/>
    </location>
    <ligand>
        <name>Zn(2+)</name>
        <dbReference type="ChEBI" id="CHEBI:29105"/>
        <label>1</label>
    </ligand>
</feature>
<feature type="binding site" evidence="1">
    <location>
        <position position="172"/>
    </location>
    <ligand>
        <name>Zn(2+)</name>
        <dbReference type="ChEBI" id="CHEBI:29105"/>
        <label>2</label>
    </ligand>
</feature>
<dbReference type="EC" id="3.5.1.9" evidence="1"/>
<dbReference type="EMBL" id="CP000356">
    <property type="protein sequence ID" value="ABF53104.1"/>
    <property type="molecule type" value="Genomic_DNA"/>
</dbReference>
<dbReference type="RefSeq" id="WP_011541684.1">
    <property type="nucleotide sequence ID" value="NC_008048.1"/>
</dbReference>
<dbReference type="SMR" id="Q1GTB8"/>
<dbReference type="STRING" id="317655.Sala_1390"/>
<dbReference type="KEGG" id="sal:Sala_1390"/>
<dbReference type="eggNOG" id="COG1878">
    <property type="taxonomic scope" value="Bacteria"/>
</dbReference>
<dbReference type="HOGENOM" id="CLU_030671_3_1_5"/>
<dbReference type="OrthoDB" id="9777007at2"/>
<dbReference type="UniPathway" id="UPA00333">
    <property type="reaction ID" value="UER00454"/>
</dbReference>
<dbReference type="Proteomes" id="UP000006578">
    <property type="component" value="Chromosome"/>
</dbReference>
<dbReference type="GO" id="GO:0004061">
    <property type="term" value="F:arylformamidase activity"/>
    <property type="evidence" value="ECO:0000250"/>
    <property type="project" value="UniProtKB"/>
</dbReference>
<dbReference type="GO" id="GO:0004328">
    <property type="term" value="F:formamidase activity"/>
    <property type="evidence" value="ECO:0007669"/>
    <property type="project" value="InterPro"/>
</dbReference>
<dbReference type="GO" id="GO:0008270">
    <property type="term" value="F:zinc ion binding"/>
    <property type="evidence" value="ECO:0007669"/>
    <property type="project" value="UniProtKB-UniRule"/>
</dbReference>
<dbReference type="GO" id="GO:0043420">
    <property type="term" value="P:anthranilate metabolic process"/>
    <property type="evidence" value="ECO:0000250"/>
    <property type="project" value="UniProtKB"/>
</dbReference>
<dbReference type="GO" id="GO:0019441">
    <property type="term" value="P:L-tryptophan catabolic process to kynurenine"/>
    <property type="evidence" value="ECO:0000250"/>
    <property type="project" value="UniProtKB"/>
</dbReference>
<dbReference type="FunFam" id="3.50.30.50:FF:000001">
    <property type="entry name" value="Kynurenine formamidase"/>
    <property type="match status" value="1"/>
</dbReference>
<dbReference type="Gene3D" id="3.50.30.50">
    <property type="entry name" value="Putative cyclase"/>
    <property type="match status" value="1"/>
</dbReference>
<dbReference type="HAMAP" id="MF_01969">
    <property type="entry name" value="KynB"/>
    <property type="match status" value="1"/>
</dbReference>
<dbReference type="InterPro" id="IPR007325">
    <property type="entry name" value="KFase/CYL"/>
</dbReference>
<dbReference type="InterPro" id="IPR037175">
    <property type="entry name" value="KFase_sf"/>
</dbReference>
<dbReference type="InterPro" id="IPR017484">
    <property type="entry name" value="Kynurenine_formamidase_bac"/>
</dbReference>
<dbReference type="NCBIfam" id="TIGR03035">
    <property type="entry name" value="trp_arylform"/>
    <property type="match status" value="1"/>
</dbReference>
<dbReference type="PANTHER" id="PTHR31118">
    <property type="entry name" value="CYCLASE-LIKE PROTEIN 2"/>
    <property type="match status" value="1"/>
</dbReference>
<dbReference type="PANTHER" id="PTHR31118:SF32">
    <property type="entry name" value="KYNURENINE FORMAMIDASE"/>
    <property type="match status" value="1"/>
</dbReference>
<dbReference type="Pfam" id="PF04199">
    <property type="entry name" value="Cyclase"/>
    <property type="match status" value="1"/>
</dbReference>
<dbReference type="SUPFAM" id="SSF102198">
    <property type="entry name" value="Putative cyclase"/>
    <property type="match status" value="1"/>
</dbReference>
<protein>
    <recommendedName>
        <fullName evidence="1">Kynurenine formamidase</fullName>
        <shortName evidence="1">KFA</shortName>
        <shortName evidence="1">KFase</shortName>
        <ecNumber evidence="1">3.5.1.9</ecNumber>
    </recommendedName>
    <alternativeName>
        <fullName evidence="1">Arylformamidase</fullName>
    </alternativeName>
    <alternativeName>
        <fullName evidence="1">N-formylkynurenine formamidase</fullName>
        <shortName evidence="1">FKF</shortName>
    </alternativeName>
</protein>
<proteinExistence type="inferred from homology"/>
<gene>
    <name evidence="1" type="primary">kynB</name>
    <name type="ordered locus">Sala_1390</name>
</gene>
<name>KYNB_SPHAL</name>
<accession>Q1GTB8</accession>
<reference key="1">
    <citation type="journal article" date="2009" name="Proc. Natl. Acad. Sci. U.S.A.">
        <title>The genomic basis of trophic strategy in marine bacteria.</title>
        <authorList>
            <person name="Lauro F.M."/>
            <person name="McDougald D."/>
            <person name="Thomas T."/>
            <person name="Williams T.J."/>
            <person name="Egan S."/>
            <person name="Rice S."/>
            <person name="DeMaere M.Z."/>
            <person name="Ting L."/>
            <person name="Ertan H."/>
            <person name="Johnson J."/>
            <person name="Ferriera S."/>
            <person name="Lapidus A."/>
            <person name="Anderson I."/>
            <person name="Kyrpides N."/>
            <person name="Munk A.C."/>
            <person name="Detter C."/>
            <person name="Han C.S."/>
            <person name="Brown M.V."/>
            <person name="Robb F.T."/>
            <person name="Kjelleberg S."/>
            <person name="Cavicchioli R."/>
        </authorList>
    </citation>
    <scope>NUCLEOTIDE SEQUENCE [LARGE SCALE GENOMIC DNA]</scope>
    <source>
        <strain>DSM 13593 / LMG 18877 / RB2256</strain>
    </source>
</reference>
<evidence type="ECO:0000255" key="1">
    <source>
        <dbReference type="HAMAP-Rule" id="MF_01969"/>
    </source>
</evidence>